<proteinExistence type="inferred from homology"/>
<name>MINE_PSEA6</name>
<accession>Q15XD5</accession>
<reference key="1">
    <citation type="submission" date="2006-06" db="EMBL/GenBank/DDBJ databases">
        <title>Complete sequence of Pseudoalteromonas atlantica T6c.</title>
        <authorList>
            <consortium name="US DOE Joint Genome Institute"/>
            <person name="Copeland A."/>
            <person name="Lucas S."/>
            <person name="Lapidus A."/>
            <person name="Barry K."/>
            <person name="Detter J.C."/>
            <person name="Glavina del Rio T."/>
            <person name="Hammon N."/>
            <person name="Israni S."/>
            <person name="Dalin E."/>
            <person name="Tice H."/>
            <person name="Pitluck S."/>
            <person name="Saunders E."/>
            <person name="Brettin T."/>
            <person name="Bruce D."/>
            <person name="Han C."/>
            <person name="Tapia R."/>
            <person name="Gilna P."/>
            <person name="Schmutz J."/>
            <person name="Larimer F."/>
            <person name="Land M."/>
            <person name="Hauser L."/>
            <person name="Kyrpides N."/>
            <person name="Kim E."/>
            <person name="Karls A.C."/>
            <person name="Bartlett D."/>
            <person name="Higgins B.P."/>
            <person name="Richardson P."/>
        </authorList>
    </citation>
    <scope>NUCLEOTIDE SEQUENCE [LARGE SCALE GENOMIC DNA]</scope>
    <source>
        <strain>T6c / ATCC BAA-1087</strain>
    </source>
</reference>
<comment type="function">
    <text evidence="1">Prevents the cell division inhibition by proteins MinC and MinD at internal division sites while permitting inhibition at polar sites. This ensures cell division at the proper site by restricting the formation of a division septum at the midpoint of the long axis of the cell.</text>
</comment>
<comment type="similarity">
    <text evidence="1">Belongs to the MinE family.</text>
</comment>
<dbReference type="EMBL" id="CP000388">
    <property type="protein sequence ID" value="ABG39453.1"/>
    <property type="molecule type" value="Genomic_DNA"/>
</dbReference>
<dbReference type="RefSeq" id="WP_011573813.1">
    <property type="nucleotide sequence ID" value="NC_008228.1"/>
</dbReference>
<dbReference type="SMR" id="Q15XD5"/>
<dbReference type="STRING" id="342610.Patl_0927"/>
<dbReference type="KEGG" id="pat:Patl_0927"/>
<dbReference type="eggNOG" id="COG0851">
    <property type="taxonomic scope" value="Bacteria"/>
</dbReference>
<dbReference type="HOGENOM" id="CLU_137929_2_2_6"/>
<dbReference type="OrthoDB" id="9802655at2"/>
<dbReference type="Proteomes" id="UP000001981">
    <property type="component" value="Chromosome"/>
</dbReference>
<dbReference type="GO" id="GO:0051301">
    <property type="term" value="P:cell division"/>
    <property type="evidence" value="ECO:0007669"/>
    <property type="project" value="UniProtKB-KW"/>
</dbReference>
<dbReference type="GO" id="GO:0032955">
    <property type="term" value="P:regulation of division septum assembly"/>
    <property type="evidence" value="ECO:0007669"/>
    <property type="project" value="InterPro"/>
</dbReference>
<dbReference type="FunFam" id="3.30.1070.10:FF:000001">
    <property type="entry name" value="Cell division topological specificity factor"/>
    <property type="match status" value="1"/>
</dbReference>
<dbReference type="Gene3D" id="3.30.1070.10">
    <property type="entry name" value="Cell division topological specificity factor MinE"/>
    <property type="match status" value="1"/>
</dbReference>
<dbReference type="HAMAP" id="MF_00262">
    <property type="entry name" value="MinE"/>
    <property type="match status" value="1"/>
</dbReference>
<dbReference type="InterPro" id="IPR005527">
    <property type="entry name" value="MinE"/>
</dbReference>
<dbReference type="InterPro" id="IPR036707">
    <property type="entry name" value="MinE_sf"/>
</dbReference>
<dbReference type="NCBIfam" id="TIGR01215">
    <property type="entry name" value="minE"/>
    <property type="match status" value="1"/>
</dbReference>
<dbReference type="NCBIfam" id="NF001422">
    <property type="entry name" value="PRK00296.1"/>
    <property type="match status" value="1"/>
</dbReference>
<dbReference type="Pfam" id="PF03776">
    <property type="entry name" value="MinE"/>
    <property type="match status" value="1"/>
</dbReference>
<dbReference type="SUPFAM" id="SSF55229">
    <property type="entry name" value="Cell division protein MinE topological specificity domain"/>
    <property type="match status" value="1"/>
</dbReference>
<protein>
    <recommendedName>
        <fullName evidence="1">Cell division topological specificity factor</fullName>
    </recommendedName>
</protein>
<organism>
    <name type="scientific">Pseudoalteromonas atlantica (strain T6c / ATCC BAA-1087)</name>
    <dbReference type="NCBI Taxonomy" id="3042615"/>
    <lineage>
        <taxon>Bacteria</taxon>
        <taxon>Pseudomonadati</taxon>
        <taxon>Pseudomonadota</taxon>
        <taxon>Gammaproteobacteria</taxon>
        <taxon>Alteromonadales</taxon>
        <taxon>Alteromonadaceae</taxon>
        <taxon>Paraglaciecola</taxon>
    </lineage>
</organism>
<gene>
    <name evidence="1" type="primary">minE</name>
    <name type="ordered locus">Patl_0927</name>
</gene>
<keyword id="KW-0131">Cell cycle</keyword>
<keyword id="KW-0132">Cell division</keyword>
<evidence type="ECO:0000255" key="1">
    <source>
        <dbReference type="HAMAP-Rule" id="MF_00262"/>
    </source>
</evidence>
<sequence>MSIFNYFLKKEKKSSASLAKERLQIIVAHERSKRQQPDYLPLMQKEIMDVIRKYVNIDEEQVIVQLDNNEDCSVLELNITLPE</sequence>
<feature type="chain" id="PRO_0000298157" description="Cell division topological specificity factor">
    <location>
        <begin position="1"/>
        <end position="83"/>
    </location>
</feature>